<proteinExistence type="inferred from homology"/>
<comment type="similarity">
    <text evidence="1">Belongs to the bacterial ribosomal protein bL36 family.</text>
</comment>
<reference key="1">
    <citation type="journal article" date="2010" name="Genome Biol.">
        <title>Structure and dynamics of the pan-genome of Streptococcus pneumoniae and closely related species.</title>
        <authorList>
            <person name="Donati C."/>
            <person name="Hiller N.L."/>
            <person name="Tettelin H."/>
            <person name="Muzzi A."/>
            <person name="Croucher N.J."/>
            <person name="Angiuoli S.V."/>
            <person name="Oggioni M."/>
            <person name="Dunning Hotopp J.C."/>
            <person name="Hu F.Z."/>
            <person name="Riley D.R."/>
            <person name="Covacci A."/>
            <person name="Mitchell T.J."/>
            <person name="Bentley S.D."/>
            <person name="Kilian M."/>
            <person name="Ehrlich G.D."/>
            <person name="Rappuoli R."/>
            <person name="Moxon E.R."/>
            <person name="Masignani V."/>
        </authorList>
    </citation>
    <scope>NUCLEOTIDE SEQUENCE [LARGE SCALE GENOMIC DNA]</scope>
    <source>
        <strain>JJA</strain>
    </source>
</reference>
<organism>
    <name type="scientific">Streptococcus pneumoniae (strain JJA)</name>
    <dbReference type="NCBI Taxonomy" id="488222"/>
    <lineage>
        <taxon>Bacteria</taxon>
        <taxon>Bacillati</taxon>
        <taxon>Bacillota</taxon>
        <taxon>Bacilli</taxon>
        <taxon>Lactobacillales</taxon>
        <taxon>Streptococcaceae</taxon>
        <taxon>Streptococcus</taxon>
    </lineage>
</organism>
<accession>C1CC29</accession>
<keyword id="KW-0687">Ribonucleoprotein</keyword>
<keyword id="KW-0689">Ribosomal protein</keyword>
<gene>
    <name evidence="1" type="primary">rpmJ</name>
    <name type="ordered locus">SPJ_0242</name>
</gene>
<protein>
    <recommendedName>
        <fullName evidence="1">Large ribosomal subunit protein bL36</fullName>
    </recommendedName>
    <alternativeName>
        <fullName evidence="2">50S ribosomal protein L36</fullName>
    </alternativeName>
</protein>
<feature type="chain" id="PRO_1000196212" description="Large ribosomal subunit protein bL36">
    <location>
        <begin position="1"/>
        <end position="38"/>
    </location>
</feature>
<evidence type="ECO:0000255" key="1">
    <source>
        <dbReference type="HAMAP-Rule" id="MF_00251"/>
    </source>
</evidence>
<evidence type="ECO:0000305" key="2"/>
<sequence>MKVRPSVKPICEYCKVIRRNGRVMVICPANPKHKQRQG</sequence>
<dbReference type="EMBL" id="CP000919">
    <property type="protein sequence ID" value="ACO18587.1"/>
    <property type="molecule type" value="Genomic_DNA"/>
</dbReference>
<dbReference type="RefSeq" id="WP_001808836.1">
    <property type="nucleotide sequence ID" value="NC_012466.1"/>
</dbReference>
<dbReference type="SMR" id="C1CC29"/>
<dbReference type="GeneID" id="93964224"/>
<dbReference type="KEGG" id="sjj:SPJ_0242"/>
<dbReference type="HOGENOM" id="CLU_135723_6_2_9"/>
<dbReference type="Proteomes" id="UP000002206">
    <property type="component" value="Chromosome"/>
</dbReference>
<dbReference type="GO" id="GO:0005737">
    <property type="term" value="C:cytoplasm"/>
    <property type="evidence" value="ECO:0007669"/>
    <property type="project" value="UniProtKB-ARBA"/>
</dbReference>
<dbReference type="GO" id="GO:1990904">
    <property type="term" value="C:ribonucleoprotein complex"/>
    <property type="evidence" value="ECO:0007669"/>
    <property type="project" value="UniProtKB-KW"/>
</dbReference>
<dbReference type="GO" id="GO:0005840">
    <property type="term" value="C:ribosome"/>
    <property type="evidence" value="ECO:0007669"/>
    <property type="project" value="UniProtKB-KW"/>
</dbReference>
<dbReference type="GO" id="GO:0003735">
    <property type="term" value="F:structural constituent of ribosome"/>
    <property type="evidence" value="ECO:0007669"/>
    <property type="project" value="InterPro"/>
</dbReference>
<dbReference type="GO" id="GO:0006412">
    <property type="term" value="P:translation"/>
    <property type="evidence" value="ECO:0007669"/>
    <property type="project" value="UniProtKB-UniRule"/>
</dbReference>
<dbReference type="HAMAP" id="MF_00251">
    <property type="entry name" value="Ribosomal_bL36"/>
    <property type="match status" value="1"/>
</dbReference>
<dbReference type="InterPro" id="IPR000473">
    <property type="entry name" value="Ribosomal_bL36"/>
</dbReference>
<dbReference type="InterPro" id="IPR035977">
    <property type="entry name" value="Ribosomal_bL36_sp"/>
</dbReference>
<dbReference type="NCBIfam" id="TIGR01022">
    <property type="entry name" value="rpmJ_bact"/>
    <property type="match status" value="1"/>
</dbReference>
<dbReference type="PANTHER" id="PTHR42888">
    <property type="entry name" value="50S RIBOSOMAL PROTEIN L36, CHLOROPLASTIC"/>
    <property type="match status" value="1"/>
</dbReference>
<dbReference type="PANTHER" id="PTHR42888:SF1">
    <property type="entry name" value="LARGE RIBOSOMAL SUBUNIT PROTEIN BL36C"/>
    <property type="match status" value="1"/>
</dbReference>
<dbReference type="Pfam" id="PF00444">
    <property type="entry name" value="Ribosomal_L36"/>
    <property type="match status" value="1"/>
</dbReference>
<dbReference type="SUPFAM" id="SSF57840">
    <property type="entry name" value="Ribosomal protein L36"/>
    <property type="match status" value="1"/>
</dbReference>
<dbReference type="PROSITE" id="PS00828">
    <property type="entry name" value="RIBOSOMAL_L36"/>
    <property type="match status" value="1"/>
</dbReference>
<name>RL36_STRZJ</name>